<keyword id="KW-0002">3D-structure</keyword>
<keyword id="KW-1003">Cell membrane</keyword>
<keyword id="KW-0472">Membrane</keyword>
<keyword id="KW-1185">Reference proteome</keyword>
<keyword id="KW-0812">Transmembrane</keyword>
<keyword id="KW-1133">Transmembrane helix</keyword>
<keyword id="KW-0813">Transport</keyword>
<reference key="1">
    <citation type="journal article" date="2006" name="Proc. Natl. Acad. Sci. U.S.A.">
        <title>Comparative genomics of the lactic acid bacteria.</title>
        <authorList>
            <person name="Makarova K.S."/>
            <person name="Slesarev A."/>
            <person name="Wolf Y.I."/>
            <person name="Sorokin A."/>
            <person name="Mirkin B."/>
            <person name="Koonin E.V."/>
            <person name="Pavlov A."/>
            <person name="Pavlova N."/>
            <person name="Karamychev V."/>
            <person name="Polouchine N."/>
            <person name="Shakhova V."/>
            <person name="Grigoriev I."/>
            <person name="Lou Y."/>
            <person name="Rohksar D."/>
            <person name="Lucas S."/>
            <person name="Huang K."/>
            <person name="Goodstein D.M."/>
            <person name="Hawkins T."/>
            <person name="Plengvidhya V."/>
            <person name="Welker D."/>
            <person name="Hughes J."/>
            <person name="Goh Y."/>
            <person name="Benson A."/>
            <person name="Baldwin K."/>
            <person name="Lee J.-H."/>
            <person name="Diaz-Muniz I."/>
            <person name="Dosti B."/>
            <person name="Smeianov V."/>
            <person name="Wechter W."/>
            <person name="Barabote R."/>
            <person name="Lorca G."/>
            <person name="Altermann E."/>
            <person name="Barrangou R."/>
            <person name="Ganesan B."/>
            <person name="Xie Y."/>
            <person name="Rawsthorne H."/>
            <person name="Tamir D."/>
            <person name="Parker C."/>
            <person name="Breidt F."/>
            <person name="Broadbent J.R."/>
            <person name="Hutkins R."/>
            <person name="O'Sullivan D."/>
            <person name="Steele J."/>
            <person name="Unlu G."/>
            <person name="Saier M.H. Jr."/>
            <person name="Klaenhammer T."/>
            <person name="Richardson P."/>
            <person name="Kozyavkin S."/>
            <person name="Weimer B.C."/>
            <person name="Mills D.A."/>
        </authorList>
    </citation>
    <scope>NUCLEOTIDE SEQUENCE [LARGE SCALE GENOMIC DNA]</scope>
    <source>
        <strain>ATCC 367 / BCRC 12310 / CIP 105137 / JCM 1170 / LMG 11437 / NCIMB 947 / NCTC 947</strain>
    </source>
</reference>
<protein>
    <recommendedName>
        <fullName evidence="1">Energy-coupling factor transporter transmembrane protein EcfT</fullName>
        <shortName evidence="1">ECF transporter T component EcfT</shortName>
    </recommendedName>
</protein>
<accession>Q03PY7</accession>
<name>ECFT_LEVBA</name>
<evidence type="ECO:0000255" key="1">
    <source>
        <dbReference type="HAMAP-Rule" id="MF_01461"/>
    </source>
</evidence>
<evidence type="ECO:0007829" key="2">
    <source>
        <dbReference type="PDB" id="4HUQ"/>
    </source>
</evidence>
<evidence type="ECO:0007829" key="3">
    <source>
        <dbReference type="PDB" id="4RFS"/>
    </source>
</evidence>
<gene>
    <name evidence="1" type="primary">ecfT</name>
    <name type="ordered locus">LVIS_1660</name>
</gene>
<comment type="function">
    <text evidence="1">Transmembrane (T) component of an energy-coupling factor (ECF) ABC-transporter complex. Unlike classic ABC transporters this ECF transporter provides the energy necessary to transport a number of different substrates.</text>
</comment>
<comment type="subunit">
    <text evidence="1">Forms a stable energy-coupling factor (ECF) transporter complex composed of 2 membrane-embedded substrate-binding proteins (S component), 2 ATP-binding proteins (A component) and 2 transmembrane proteins (T component). May be able to interact with more than 1 S component at a time (By similarity).</text>
</comment>
<comment type="subcellular location">
    <subcellularLocation>
        <location evidence="1">Cell membrane</location>
        <topology evidence="1">Multi-pass membrane protein</topology>
    </subcellularLocation>
</comment>
<comment type="similarity">
    <text evidence="1">Belongs to the energy-coupling factor EcfT family.</text>
</comment>
<feature type="chain" id="PRO_0000408990" description="Energy-coupling factor transporter transmembrane protein EcfT">
    <location>
        <begin position="1"/>
        <end position="266"/>
    </location>
</feature>
<feature type="transmembrane region" description="Helical" evidence="1">
    <location>
        <begin position="32"/>
        <end position="52"/>
    </location>
</feature>
<feature type="transmembrane region" description="Helical" evidence="1">
    <location>
        <begin position="71"/>
        <end position="91"/>
    </location>
</feature>
<feature type="transmembrane region" description="Helical" evidence="1">
    <location>
        <begin position="107"/>
        <end position="127"/>
    </location>
</feature>
<feature type="transmembrane region" description="Helical" evidence="1">
    <location>
        <begin position="152"/>
        <end position="172"/>
    </location>
</feature>
<feature type="transmembrane region" description="Helical" evidence="1">
    <location>
        <begin position="246"/>
        <end position="266"/>
    </location>
</feature>
<feature type="strand" evidence="2">
    <location>
        <begin position="14"/>
        <end position="16"/>
    </location>
</feature>
<feature type="helix" evidence="2">
    <location>
        <begin position="22"/>
        <end position="37"/>
    </location>
</feature>
<feature type="helix" evidence="2">
    <location>
        <begin position="42"/>
        <end position="57"/>
    </location>
</feature>
<feature type="helix" evidence="2">
    <location>
        <begin position="64"/>
        <end position="69"/>
    </location>
</feature>
<feature type="helix" evidence="2">
    <location>
        <begin position="70"/>
        <end position="72"/>
    </location>
</feature>
<feature type="helix" evidence="2">
    <location>
        <begin position="73"/>
        <end position="84"/>
    </location>
</feature>
<feature type="turn" evidence="3">
    <location>
        <begin position="90"/>
        <end position="93"/>
    </location>
</feature>
<feature type="helix" evidence="2">
    <location>
        <begin position="104"/>
        <end position="129"/>
    </location>
</feature>
<feature type="helix" evidence="2">
    <location>
        <begin position="133"/>
        <end position="142"/>
    </location>
</feature>
<feature type="strand" evidence="3">
    <location>
        <begin position="143"/>
        <end position="146"/>
    </location>
</feature>
<feature type="helix" evidence="2">
    <location>
        <begin position="148"/>
        <end position="150"/>
    </location>
</feature>
<feature type="helix" evidence="2">
    <location>
        <begin position="154"/>
        <end position="183"/>
    </location>
</feature>
<feature type="strand" evidence="3">
    <location>
        <begin position="189"/>
        <end position="192"/>
    </location>
</feature>
<feature type="helix" evidence="2">
    <location>
        <begin position="195"/>
        <end position="199"/>
    </location>
</feature>
<feature type="helix" evidence="2">
    <location>
        <begin position="202"/>
        <end position="225"/>
    </location>
</feature>
<feature type="strand" evidence="2">
    <location>
        <begin position="231"/>
        <end position="233"/>
    </location>
</feature>
<feature type="helix" evidence="2">
    <location>
        <begin position="244"/>
        <end position="261"/>
    </location>
</feature>
<dbReference type="EMBL" id="CP000416">
    <property type="protein sequence ID" value="ABJ64735.1"/>
    <property type="molecule type" value="Genomic_DNA"/>
</dbReference>
<dbReference type="RefSeq" id="WP_011668469.1">
    <property type="nucleotide sequence ID" value="NC_008497.1"/>
</dbReference>
<dbReference type="PDB" id="4HUQ">
    <property type="method" value="X-ray"/>
    <property type="resolution" value="3.00 A"/>
    <property type="chains" value="T=1-266"/>
</dbReference>
<dbReference type="PDB" id="4HZU">
    <property type="method" value="X-ray"/>
    <property type="resolution" value="3.53 A"/>
    <property type="chains" value="T=1-266"/>
</dbReference>
<dbReference type="PDB" id="4RFS">
    <property type="method" value="X-ray"/>
    <property type="resolution" value="3.23 A"/>
    <property type="chains" value="T=1-266"/>
</dbReference>
<dbReference type="PDBsum" id="4HUQ"/>
<dbReference type="PDBsum" id="4HZU"/>
<dbReference type="PDBsum" id="4RFS"/>
<dbReference type="SMR" id="Q03PY7"/>
<dbReference type="DIP" id="DIP-60220N"/>
<dbReference type="IntAct" id="Q03PY7">
    <property type="interactions" value="4"/>
</dbReference>
<dbReference type="STRING" id="387344.LVIS_1660"/>
<dbReference type="TCDB" id="3.A.1.26.9">
    <property type="family name" value="the atp-binding cassette (abc) superfamily"/>
</dbReference>
<dbReference type="TCDB" id="3.A.1.28.2">
    <property type="family name" value="the atp-binding cassette (abc) superfamily"/>
</dbReference>
<dbReference type="KEGG" id="lbr:LVIS_1660"/>
<dbReference type="eggNOG" id="COG0619">
    <property type="taxonomic scope" value="Bacteria"/>
</dbReference>
<dbReference type="HOGENOM" id="CLU_056469_2_2_9"/>
<dbReference type="EvolutionaryTrace" id="Q03PY7"/>
<dbReference type="Proteomes" id="UP000001652">
    <property type="component" value="Chromosome"/>
</dbReference>
<dbReference type="GO" id="GO:0005886">
    <property type="term" value="C:plasma membrane"/>
    <property type="evidence" value="ECO:0007669"/>
    <property type="project" value="UniProtKB-SubCell"/>
</dbReference>
<dbReference type="GO" id="GO:0022857">
    <property type="term" value="F:transmembrane transporter activity"/>
    <property type="evidence" value="ECO:0007669"/>
    <property type="project" value="UniProtKB-UniRule"/>
</dbReference>
<dbReference type="CDD" id="cd16914">
    <property type="entry name" value="EcfT"/>
    <property type="match status" value="1"/>
</dbReference>
<dbReference type="HAMAP" id="MF_01461">
    <property type="entry name" value="EcfT"/>
    <property type="match status" value="1"/>
</dbReference>
<dbReference type="InterPro" id="IPR003339">
    <property type="entry name" value="ABC/ECF_trnsptr_transmembrane"/>
</dbReference>
<dbReference type="InterPro" id="IPR051611">
    <property type="entry name" value="ECF_transporter_component"/>
</dbReference>
<dbReference type="InterPro" id="IPR024919">
    <property type="entry name" value="EcfT"/>
</dbReference>
<dbReference type="PANTHER" id="PTHR34857">
    <property type="entry name" value="SLL0384 PROTEIN"/>
    <property type="match status" value="1"/>
</dbReference>
<dbReference type="PANTHER" id="PTHR34857:SF2">
    <property type="entry name" value="SLL0384 PROTEIN"/>
    <property type="match status" value="1"/>
</dbReference>
<dbReference type="Pfam" id="PF02361">
    <property type="entry name" value="CbiQ"/>
    <property type="match status" value="1"/>
</dbReference>
<organism>
    <name type="scientific">Levilactobacillus brevis (strain ATCC 367 / BCRC 12310 / CIP 105137 / JCM 1170 / LMG 11437 / NCIMB 947 / NCTC 947)</name>
    <name type="common">Lactobacillus brevis</name>
    <dbReference type="NCBI Taxonomy" id="387344"/>
    <lineage>
        <taxon>Bacteria</taxon>
        <taxon>Bacillati</taxon>
        <taxon>Bacillota</taxon>
        <taxon>Bacilli</taxon>
        <taxon>Lactobacillales</taxon>
        <taxon>Lactobacillaceae</taxon>
        <taxon>Levilactobacillus</taxon>
    </lineage>
</organism>
<sequence>MSNFIFGRYLPLDSVVHRLDPRAKLMLSFCYIIVVFLANNIWSYAILIAFTVGAILSSKISLGFFLKGIRPLLWLIVFTVVLQLLFSPAGGHTYFHWAFINVTQDGLINAGYIFVRFLLIIMMSTLLTLSTQPLDIATGLASLMKPLRWVKVPVDTLAMMLSIALRFVPTLMDEATKIMNAQRARGVDFGEGGLFKQAKSLIPLMVPLFMSAFNRAEDLSTAMEARGYQDSEHRSQYRILTWQRRDTVTWLLFLLGFVAILIFRHW</sequence>
<proteinExistence type="evidence at protein level"/>